<gene>
    <name type="primary">S6</name>
</gene>
<comment type="function">
    <text evidence="1">Minor inner capsid component. Displays NTPase and RNA 5'-triphosphatase (RTPase) activities. May function as a cofactor of polymerase VP2. Associates with microtubules and plays a role in the formation, structural organization and morphology of viral inclusions, where the assembly of cores and the replication of viral RNA occur (By similarity).</text>
</comment>
<comment type="subunit">
    <text evidence="1">Interacts with VP2.</text>
</comment>
<comment type="subcellular location">
    <subcellularLocation>
        <location evidence="1">Virion</location>
    </subcellularLocation>
    <subcellularLocation>
        <location evidence="1">Host cytoplasm</location>
        <location evidence="1">Host cytoskeleton</location>
    </subcellularLocation>
</comment>
<dbReference type="EMBL" id="AF389467">
    <property type="protein sequence ID" value="AAK73525.1"/>
    <property type="molecule type" value="Genomic_RNA"/>
</dbReference>
<dbReference type="RefSeq" id="NP_149151.1">
    <property type="nucleotide sequence ID" value="NC_003021.1"/>
</dbReference>
<dbReference type="SMR" id="Q91ID6"/>
<dbReference type="KEGG" id="vg:2598193"/>
<dbReference type="Proteomes" id="UP000006712">
    <property type="component" value="Genome"/>
</dbReference>
<dbReference type="GO" id="GO:0030430">
    <property type="term" value="C:host cell cytoplasm"/>
    <property type="evidence" value="ECO:0007669"/>
    <property type="project" value="UniProtKB-KW"/>
</dbReference>
<dbReference type="GO" id="GO:0044163">
    <property type="term" value="C:host cytoskeleton"/>
    <property type="evidence" value="ECO:0007669"/>
    <property type="project" value="UniProtKB-SubCell"/>
</dbReference>
<dbReference type="GO" id="GO:0039625">
    <property type="term" value="C:viral inner capsid"/>
    <property type="evidence" value="ECO:0007669"/>
    <property type="project" value="UniProtKB-KW"/>
</dbReference>
<reference key="1">
    <citation type="submission" date="2001-06" db="EMBL/GenBank/DDBJ databases">
        <title>Identification of dsRNA lectrophoretypes of two cypoviruses from a dual infection in gypsy moth, Lymantria dispar.</title>
        <authorList>
            <person name="Rao S."/>
            <person name="Shapiro M."/>
            <person name="Lynn D."/>
            <person name="Hagiwara K."/>
            <person name="Blackmon B."/>
            <person name="Fang G."/>
            <person name="Carner G.R."/>
        </authorList>
    </citation>
    <scope>NUCLEOTIDE SEQUENCE [GENOMIC RNA]</scope>
</reference>
<protein>
    <recommendedName>
        <fullName>Microtubule-associated protein VP6</fullName>
    </recommendedName>
</protein>
<accession>Q91ID6</accession>
<organism>
    <name type="scientific">Lymantria dispar cypovirus 1 (isolate Rao)</name>
    <name type="common">LdCPV-1</name>
    <dbReference type="NCBI Taxonomy" id="648169"/>
    <lineage>
        <taxon>Viruses</taxon>
        <taxon>Riboviria</taxon>
        <taxon>Orthornavirae</taxon>
        <taxon>Duplornaviricota</taxon>
        <taxon>Resentoviricetes</taxon>
        <taxon>Reovirales</taxon>
        <taxon>Spinareoviridae</taxon>
        <taxon>Cypovirus</taxon>
        <taxon>Cypovirus 1</taxon>
    </lineage>
</organism>
<sequence length="561" mass="63522">MFAIDPLKHSKLYEEYGLYLRPHQINQEIKPTTIKKKELAPTIRSIRYASLLHSMLAKHAARHNGTLINPRMYADMITLGNTKVTVTKGTPKAQIDTLKMNGLTVVSKSRRNNKKKPVSDTTATTDENTNDIVTYKALTEMSTLVESFHLPSGLTLIVFDDEKYQSLIPDYINQLITYTQPHIIPTWQGIADFSDPYLRSYFRRPFELTASNLASPQKHNLSPLTRSIFNNTGREDAIIKKLYGYGEYIFIKYEGCLITWTGVYGAVAMMVNLPKRDLGLDAGDNFLKEYKQLLFYGVITDATPSGISAKSTVIKISPHKMMNPSGGALAVLSKFLEAVVSANVINATLVVYAEKGAGKTSFLSTYAERLSVASGQAVGHLSSDAYGRWLAKNKDVKEPSFEYDYVLSRDTDDTESYYEQRASELLTLHGISELAQYELLSVRKKVKMMNEMNEILIAQLENADTHSERNFYYMVSTGKNTPRTLIVEGHFNAQDATIARTDTTVLLRTINDTTQAMRDRQRSGVVQLFLRDTYYRLLPSLHTTVYPFEMLESIKRWKWVH</sequence>
<proteinExistence type="inferred from homology"/>
<evidence type="ECO:0000250" key="1"/>
<organismHost>
    <name type="scientific">Lymantria dispar</name>
    <name type="common">Gypsy moth</name>
    <name type="synonym">Porthetria dispar</name>
    <dbReference type="NCBI Taxonomy" id="13123"/>
</organismHost>
<keyword id="KW-0167">Capsid protein</keyword>
<keyword id="KW-1035">Host cytoplasm</keyword>
<keyword id="KW-1037">Host cytoskeleton</keyword>
<keyword id="KW-1153">Inner capsid protein</keyword>
<keyword id="KW-1185">Reference proteome</keyword>
<keyword id="KW-0946">Virion</keyword>
<feature type="chain" id="PRO_0000403209" description="Microtubule-associated protein VP6">
    <location>
        <begin position="1"/>
        <end position="561"/>
    </location>
</feature>
<name>VP6_LDCPR</name>